<feature type="signal peptide" evidence="1">
    <location>
        <begin position="1"/>
        <end position="20"/>
    </location>
</feature>
<feature type="chain" id="PRO_0000011744" description="Thyrotropin subunit beta">
    <location>
        <begin position="21"/>
        <end position="132"/>
    </location>
</feature>
<feature type="propeptide" id="PRO_0000011745" evidence="1">
    <location>
        <begin position="133"/>
        <end position="138"/>
    </location>
</feature>
<feature type="glycosylation site" description="N-linked (GlcNAc...) asparagine" evidence="2">
    <location>
        <position position="43"/>
    </location>
</feature>
<feature type="disulfide bond" evidence="1">
    <location>
        <begin position="22"/>
        <end position="72"/>
    </location>
</feature>
<feature type="disulfide bond" evidence="1">
    <location>
        <begin position="36"/>
        <end position="87"/>
    </location>
</feature>
<feature type="disulfide bond" evidence="1">
    <location>
        <begin position="39"/>
        <end position="125"/>
    </location>
</feature>
<feature type="disulfide bond" evidence="1">
    <location>
        <begin position="47"/>
        <end position="103"/>
    </location>
</feature>
<feature type="disulfide bond" evidence="1">
    <location>
        <begin position="51"/>
        <end position="105"/>
    </location>
</feature>
<feature type="disulfide bond" evidence="1">
    <location>
        <begin position="108"/>
        <end position="115"/>
    </location>
</feature>
<accession>Q28376</accession>
<gene>
    <name type="primary">TSHB</name>
</gene>
<keyword id="KW-1015">Disulfide bond</keyword>
<keyword id="KW-0325">Glycoprotein</keyword>
<keyword id="KW-0372">Hormone</keyword>
<keyword id="KW-1185">Reference proteome</keyword>
<keyword id="KW-0964">Secreted</keyword>
<keyword id="KW-0732">Signal</keyword>
<organism>
    <name type="scientific">Equus caballus</name>
    <name type="common">Horse</name>
    <dbReference type="NCBI Taxonomy" id="9796"/>
    <lineage>
        <taxon>Eukaryota</taxon>
        <taxon>Metazoa</taxon>
        <taxon>Chordata</taxon>
        <taxon>Craniata</taxon>
        <taxon>Vertebrata</taxon>
        <taxon>Euteleostomi</taxon>
        <taxon>Mammalia</taxon>
        <taxon>Eutheria</taxon>
        <taxon>Laurasiatheria</taxon>
        <taxon>Perissodactyla</taxon>
        <taxon>Equidae</taxon>
        <taxon>Equus</taxon>
    </lineage>
</organism>
<sequence length="138" mass="15663">MTAIFLMSMVFGLACGQTMSFCIPTEYMMHVERKECAYCLTINTTICAGYCMTRDINGKLFLPKYALSQDVCTYRDFMYKTVEIPGCPDHVTPYFSYPVAVSCKCGKCNTDYSDCIHEAIKANYCTKPQKSYVVEFSI</sequence>
<dbReference type="EMBL" id="U51789">
    <property type="protein sequence ID" value="AAA96826.1"/>
    <property type="molecule type" value="mRNA"/>
</dbReference>
<dbReference type="RefSeq" id="NP_001075960.1">
    <property type="nucleotide sequence ID" value="NM_001082491.1"/>
</dbReference>
<dbReference type="RefSeq" id="XP_014595481.1">
    <property type="nucleotide sequence ID" value="XM_014739995.3"/>
</dbReference>
<dbReference type="SMR" id="Q28376"/>
<dbReference type="FunCoup" id="Q28376">
    <property type="interactions" value="70"/>
</dbReference>
<dbReference type="STRING" id="9796.ENSECAP00000010679"/>
<dbReference type="GlyCosmos" id="Q28376">
    <property type="glycosylation" value="1 site, No reported glycans"/>
</dbReference>
<dbReference type="PaxDb" id="9796-ENSECAP00000010679"/>
<dbReference type="GeneID" id="100034188"/>
<dbReference type="KEGG" id="ecb:100034188"/>
<dbReference type="CTD" id="7252"/>
<dbReference type="HOGENOM" id="CLU_126319_0_2_1"/>
<dbReference type="InParanoid" id="Q28376"/>
<dbReference type="OMA" id="PTEYMMH"/>
<dbReference type="OrthoDB" id="8866353at2759"/>
<dbReference type="TreeFam" id="TF332940"/>
<dbReference type="Proteomes" id="UP000002281">
    <property type="component" value="Chromosome 5"/>
</dbReference>
<dbReference type="Bgee" id="ENSECAG00000012981">
    <property type="expression patterns" value="Expressed in testis"/>
</dbReference>
<dbReference type="GO" id="GO:0005737">
    <property type="term" value="C:cytoplasm"/>
    <property type="evidence" value="ECO:0000318"/>
    <property type="project" value="GO_Central"/>
</dbReference>
<dbReference type="GO" id="GO:0005615">
    <property type="term" value="C:extracellular space"/>
    <property type="evidence" value="ECO:0000318"/>
    <property type="project" value="GO_Central"/>
</dbReference>
<dbReference type="GO" id="GO:0005179">
    <property type="term" value="F:hormone activity"/>
    <property type="evidence" value="ECO:0007669"/>
    <property type="project" value="UniProtKB-KW"/>
</dbReference>
<dbReference type="GO" id="GO:0007186">
    <property type="term" value="P:G protein-coupled receptor signaling pathway"/>
    <property type="evidence" value="ECO:0000318"/>
    <property type="project" value="GO_Central"/>
</dbReference>
<dbReference type="CDD" id="cd00069">
    <property type="entry name" value="GHB_like"/>
    <property type="match status" value="1"/>
</dbReference>
<dbReference type="FunFam" id="2.10.90.10:FF:000007">
    <property type="entry name" value="Luteinizing hormone beta subunit"/>
    <property type="match status" value="1"/>
</dbReference>
<dbReference type="Gene3D" id="2.10.90.10">
    <property type="entry name" value="Cystine-knot cytokines"/>
    <property type="match status" value="1"/>
</dbReference>
<dbReference type="InterPro" id="IPR029034">
    <property type="entry name" value="Cystine-knot_cytokine"/>
</dbReference>
<dbReference type="InterPro" id="IPR006208">
    <property type="entry name" value="Glyco_hormone_CN"/>
</dbReference>
<dbReference type="InterPro" id="IPR001545">
    <property type="entry name" value="Gonadotropin_bsu"/>
</dbReference>
<dbReference type="InterPro" id="IPR018245">
    <property type="entry name" value="Gonadotropin_bsu_CS"/>
</dbReference>
<dbReference type="PANTHER" id="PTHR11515">
    <property type="entry name" value="GLYCOPROTEIN HORMONE BETA CHAIN"/>
    <property type="match status" value="1"/>
</dbReference>
<dbReference type="PANTHER" id="PTHR11515:SF5">
    <property type="entry name" value="THYROTROPIN SUBUNIT BETA"/>
    <property type="match status" value="1"/>
</dbReference>
<dbReference type="Pfam" id="PF00007">
    <property type="entry name" value="Cys_knot"/>
    <property type="match status" value="1"/>
</dbReference>
<dbReference type="SMART" id="SM00068">
    <property type="entry name" value="GHB"/>
    <property type="match status" value="1"/>
</dbReference>
<dbReference type="SUPFAM" id="SSF57501">
    <property type="entry name" value="Cystine-knot cytokines"/>
    <property type="match status" value="1"/>
</dbReference>
<dbReference type="PROSITE" id="PS00261">
    <property type="entry name" value="GLYCO_HORMONE_BETA_1"/>
    <property type="match status" value="1"/>
</dbReference>
<dbReference type="PROSITE" id="PS00689">
    <property type="entry name" value="GLYCO_HORMONE_BETA_2"/>
    <property type="match status" value="1"/>
</dbReference>
<protein>
    <recommendedName>
        <fullName>Thyrotropin subunit beta</fullName>
    </recommendedName>
    <alternativeName>
        <fullName>Thyroid-stimulating hormone subunit beta</fullName>
        <shortName>TSH-B</shortName>
        <shortName>TSH-beta</shortName>
    </alternativeName>
    <alternativeName>
        <fullName>Thyrotropin beta chain</fullName>
    </alternativeName>
</protein>
<evidence type="ECO:0000250" key="1"/>
<evidence type="ECO:0000255" key="2"/>
<evidence type="ECO:0000305" key="3"/>
<comment type="function">
    <text>Indispensable for the control of thyroid structure and metabolism.</text>
</comment>
<comment type="subunit">
    <text>Heterodimer of a common alpha chain and a unique beta chain which confers biological specificity to thyrotropin, lutropin, follitropin and gonadotropin.</text>
</comment>
<comment type="subcellular location">
    <subcellularLocation>
        <location>Secreted</location>
    </subcellularLocation>
</comment>
<comment type="similarity">
    <text evidence="3">Belongs to the glycoprotein hormones subunit beta family.</text>
</comment>
<reference key="1">
    <citation type="submission" date="1996-03" db="EMBL/GenBank/DDBJ databases">
        <authorList>
            <person name="Kania S.A."/>
            <person name="Olchowy T.W."/>
            <person name="Frank L.A."/>
        </authorList>
    </citation>
    <scope>NUCLEOTIDE SEQUENCE [MRNA]</scope>
    <source>
        <tissue>Pituitary</tissue>
    </source>
</reference>
<proteinExistence type="evidence at transcript level"/>
<name>TSHB_HORSE</name>